<feature type="chain" id="PRO_1000050065" description="Probable protein kinase UbiB">
    <location>
        <begin position="1"/>
        <end position="546"/>
    </location>
</feature>
<feature type="transmembrane region" description="Helical" evidence="1">
    <location>
        <begin position="501"/>
        <end position="521"/>
    </location>
</feature>
<feature type="transmembrane region" description="Helical" evidence="1">
    <location>
        <begin position="522"/>
        <end position="542"/>
    </location>
</feature>
<feature type="domain" description="Protein kinase" evidence="1">
    <location>
        <begin position="124"/>
        <end position="502"/>
    </location>
</feature>
<feature type="active site" description="Proton acceptor" evidence="1">
    <location>
        <position position="288"/>
    </location>
</feature>
<feature type="binding site" evidence="1">
    <location>
        <begin position="130"/>
        <end position="138"/>
    </location>
    <ligand>
        <name>ATP</name>
        <dbReference type="ChEBI" id="CHEBI:30616"/>
    </ligand>
</feature>
<feature type="binding site" evidence="1">
    <location>
        <position position="153"/>
    </location>
    <ligand>
        <name>ATP</name>
        <dbReference type="ChEBI" id="CHEBI:30616"/>
    </ligand>
</feature>
<name>UBIB_SHIDS</name>
<organism>
    <name type="scientific">Shigella dysenteriae serotype 1 (strain Sd197)</name>
    <dbReference type="NCBI Taxonomy" id="300267"/>
    <lineage>
        <taxon>Bacteria</taxon>
        <taxon>Pseudomonadati</taxon>
        <taxon>Pseudomonadota</taxon>
        <taxon>Gammaproteobacteria</taxon>
        <taxon>Enterobacterales</taxon>
        <taxon>Enterobacteriaceae</taxon>
        <taxon>Shigella</taxon>
    </lineage>
</organism>
<sequence length="546" mass="63203">MTPGEVRRLYFIIRTFLSYGLDELIPKMRITLPLRLWRYSLFWMPNRHKDKLLGERLRLALQELGPVWIKFGQMLSTRRDLFPPHIADQLALLQDKVAPFDGKLAKQQIEAAMGGLPVEAWFDDFEIKPLASASIAQVHTARLKSNGKEVVIKVIRPDILPVIKADLKLIYRLARWVPRLLPDGRRLRPTEVVREYEKTLIDELNLLRESANAIQLRRNFEDSPMLYIPEVYPDYCSEGMMVMERIYGIPVSDVAALEKNGTNMKLLAERGVQVFFTQVFRDSFFHADMHPGNIFVSYEHPENPKYIGIDCGIVGSLNKEDKRYLAENFIAFFNRDYRKVAELHVDSGWVPPDTNVEEFEFAIRTVCEPIFEKPLAEISFGHVLLNLFNTARRFNMEVQPQLVLLQKTLLYVEGVGRQLYPQLDLWKTAKPFLESWIKDQVGIPALVRAFKEKAPFWVEKMPELPELVYDSLRQGKYLQHSVDKIARELQSNHVRQGQSRYFLGIGATLVLSGTFLLVSRPEWGLMPGWLMAGGLIAWFVGWRKTR</sequence>
<dbReference type="EC" id="2.7.-.-" evidence="1"/>
<dbReference type="EMBL" id="CP000034">
    <property type="protein sequence ID" value="ABB63842.1"/>
    <property type="molecule type" value="Genomic_DNA"/>
</dbReference>
<dbReference type="RefSeq" id="WP_000187530.1">
    <property type="nucleotide sequence ID" value="NC_007606.1"/>
</dbReference>
<dbReference type="RefSeq" id="YP_405333.1">
    <property type="nucleotide sequence ID" value="NC_007606.1"/>
</dbReference>
<dbReference type="SMR" id="Q32A13"/>
<dbReference type="STRING" id="300267.SDY_3908"/>
<dbReference type="EnsemblBacteria" id="ABB63842">
    <property type="protein sequence ID" value="ABB63842"/>
    <property type="gene ID" value="SDY_3908"/>
</dbReference>
<dbReference type="GeneID" id="75204829"/>
<dbReference type="KEGG" id="sdy:SDY_3908"/>
<dbReference type="PATRIC" id="fig|300267.13.peg.4616"/>
<dbReference type="HOGENOM" id="CLU_006533_0_0_6"/>
<dbReference type="UniPathway" id="UPA00232"/>
<dbReference type="Proteomes" id="UP000002716">
    <property type="component" value="Chromosome"/>
</dbReference>
<dbReference type="GO" id="GO:0005886">
    <property type="term" value="C:plasma membrane"/>
    <property type="evidence" value="ECO:0007669"/>
    <property type="project" value="UniProtKB-SubCell"/>
</dbReference>
<dbReference type="GO" id="GO:0005524">
    <property type="term" value="F:ATP binding"/>
    <property type="evidence" value="ECO:0007669"/>
    <property type="project" value="UniProtKB-KW"/>
</dbReference>
<dbReference type="GO" id="GO:0004672">
    <property type="term" value="F:protein kinase activity"/>
    <property type="evidence" value="ECO:0007669"/>
    <property type="project" value="UniProtKB-UniRule"/>
</dbReference>
<dbReference type="GO" id="GO:0010795">
    <property type="term" value="P:regulation of ubiquinone biosynthetic process"/>
    <property type="evidence" value="ECO:0007669"/>
    <property type="project" value="UniProtKB-UniRule"/>
</dbReference>
<dbReference type="GO" id="GO:0006744">
    <property type="term" value="P:ubiquinone biosynthetic process"/>
    <property type="evidence" value="ECO:0007669"/>
    <property type="project" value="UniProtKB-UniPathway"/>
</dbReference>
<dbReference type="CDD" id="cd13972">
    <property type="entry name" value="UbiB"/>
    <property type="match status" value="1"/>
</dbReference>
<dbReference type="HAMAP" id="MF_00414">
    <property type="entry name" value="UbiB"/>
    <property type="match status" value="1"/>
</dbReference>
<dbReference type="InterPro" id="IPR004147">
    <property type="entry name" value="ABC1_dom"/>
</dbReference>
<dbReference type="InterPro" id="IPR011009">
    <property type="entry name" value="Kinase-like_dom_sf"/>
</dbReference>
<dbReference type="InterPro" id="IPR010232">
    <property type="entry name" value="UbiB"/>
</dbReference>
<dbReference type="InterPro" id="IPR045308">
    <property type="entry name" value="UbiB_bact"/>
</dbReference>
<dbReference type="InterPro" id="IPR050154">
    <property type="entry name" value="UbiB_kinase"/>
</dbReference>
<dbReference type="NCBIfam" id="NF003404">
    <property type="entry name" value="PRK04750.1"/>
    <property type="match status" value="1"/>
</dbReference>
<dbReference type="NCBIfam" id="TIGR01982">
    <property type="entry name" value="UbiB"/>
    <property type="match status" value="1"/>
</dbReference>
<dbReference type="PANTHER" id="PTHR10566">
    <property type="entry name" value="CHAPERONE-ACTIVITY OF BC1 COMPLEX CABC1 -RELATED"/>
    <property type="match status" value="1"/>
</dbReference>
<dbReference type="PANTHER" id="PTHR10566:SF113">
    <property type="entry name" value="PROTEIN ACTIVITY OF BC1 COMPLEX KINASE 7, CHLOROPLASTIC"/>
    <property type="match status" value="1"/>
</dbReference>
<dbReference type="Pfam" id="PF03109">
    <property type="entry name" value="ABC1"/>
    <property type="match status" value="1"/>
</dbReference>
<dbReference type="SUPFAM" id="SSF56112">
    <property type="entry name" value="Protein kinase-like (PK-like)"/>
    <property type="match status" value="1"/>
</dbReference>
<comment type="function">
    <text evidence="1">Is probably a protein kinase regulator of UbiI activity which is involved in aerobic coenzyme Q (ubiquinone) biosynthesis.</text>
</comment>
<comment type="pathway">
    <text>Cofactor biosynthesis; ubiquinone biosynthesis [regulation].</text>
</comment>
<comment type="subcellular location">
    <subcellularLocation>
        <location evidence="1">Cell inner membrane</location>
        <topology evidence="1">Multi-pass membrane protein</topology>
    </subcellularLocation>
</comment>
<comment type="similarity">
    <text evidence="1">Belongs to the ABC1 family. UbiB subfamily.</text>
</comment>
<keyword id="KW-0067">ATP-binding</keyword>
<keyword id="KW-0997">Cell inner membrane</keyword>
<keyword id="KW-1003">Cell membrane</keyword>
<keyword id="KW-0418">Kinase</keyword>
<keyword id="KW-0472">Membrane</keyword>
<keyword id="KW-0547">Nucleotide-binding</keyword>
<keyword id="KW-1185">Reference proteome</keyword>
<keyword id="KW-0808">Transferase</keyword>
<keyword id="KW-0812">Transmembrane</keyword>
<keyword id="KW-1133">Transmembrane helix</keyword>
<keyword id="KW-0831">Ubiquinone biosynthesis</keyword>
<gene>
    <name evidence="1" type="primary">ubiB</name>
    <name type="ordered locus">SDY_3908</name>
</gene>
<proteinExistence type="inferred from homology"/>
<reference key="1">
    <citation type="journal article" date="2005" name="Nucleic Acids Res.">
        <title>Genome dynamics and diversity of Shigella species, the etiologic agents of bacillary dysentery.</title>
        <authorList>
            <person name="Yang F."/>
            <person name="Yang J."/>
            <person name="Zhang X."/>
            <person name="Chen L."/>
            <person name="Jiang Y."/>
            <person name="Yan Y."/>
            <person name="Tang X."/>
            <person name="Wang J."/>
            <person name="Xiong Z."/>
            <person name="Dong J."/>
            <person name="Xue Y."/>
            <person name="Zhu Y."/>
            <person name="Xu X."/>
            <person name="Sun L."/>
            <person name="Chen S."/>
            <person name="Nie H."/>
            <person name="Peng J."/>
            <person name="Xu J."/>
            <person name="Wang Y."/>
            <person name="Yuan Z."/>
            <person name="Wen Y."/>
            <person name="Yao Z."/>
            <person name="Shen Y."/>
            <person name="Qiang B."/>
            <person name="Hou Y."/>
            <person name="Yu J."/>
            <person name="Jin Q."/>
        </authorList>
    </citation>
    <scope>NUCLEOTIDE SEQUENCE [LARGE SCALE GENOMIC DNA]</scope>
    <source>
        <strain>Sd197</strain>
    </source>
</reference>
<protein>
    <recommendedName>
        <fullName evidence="1">Probable protein kinase UbiB</fullName>
        <ecNumber evidence="1">2.7.-.-</ecNumber>
    </recommendedName>
    <alternativeName>
        <fullName evidence="1">Ubiquinone biosynthesis protein UbiB</fullName>
    </alternativeName>
</protein>
<accession>Q32A13</accession>
<evidence type="ECO:0000255" key="1">
    <source>
        <dbReference type="HAMAP-Rule" id="MF_00414"/>
    </source>
</evidence>